<dbReference type="EC" id="2.7.1.11" evidence="2"/>
<dbReference type="EMBL" id="U73376">
    <property type="protein sequence ID" value="AAB97871.1"/>
    <property type="molecule type" value="Genomic_DNA"/>
</dbReference>
<dbReference type="EMBL" id="FN392320">
    <property type="protein sequence ID" value="CAY69023.1"/>
    <property type="molecule type" value="Genomic_DNA"/>
</dbReference>
<dbReference type="RefSeq" id="XP_002491303.1">
    <property type="nucleotide sequence ID" value="XM_002491258.1"/>
</dbReference>
<dbReference type="SMR" id="Q92448"/>
<dbReference type="FunCoup" id="Q92448">
    <property type="interactions" value="897"/>
</dbReference>
<dbReference type="STRING" id="644223.Q92448"/>
<dbReference type="MoonDB" id="Q92448">
    <property type="type" value="Curated"/>
</dbReference>
<dbReference type="MoonProt" id="Q92448"/>
<dbReference type="EnsemblFungi" id="CAY69023">
    <property type="protein sequence ID" value="CAY69023"/>
    <property type="gene ID" value="PAS_chr2-1_0402"/>
</dbReference>
<dbReference type="GeneID" id="8198870"/>
<dbReference type="KEGG" id="ppa:PAS_chr2-1_0402"/>
<dbReference type="eggNOG" id="KOG2440">
    <property type="taxonomic scope" value="Eukaryota"/>
</dbReference>
<dbReference type="HOGENOM" id="CLU_011053_0_0_1"/>
<dbReference type="InParanoid" id="Q92448"/>
<dbReference type="OMA" id="WHNLGGS"/>
<dbReference type="OrthoDB" id="537915at2759"/>
<dbReference type="UniPathway" id="UPA00109">
    <property type="reaction ID" value="UER00182"/>
</dbReference>
<dbReference type="Proteomes" id="UP000000314">
    <property type="component" value="Chromosome 2"/>
</dbReference>
<dbReference type="GO" id="GO:0005945">
    <property type="term" value="C:6-phosphofructokinase complex"/>
    <property type="evidence" value="ECO:0000304"/>
    <property type="project" value="CAFA"/>
</dbReference>
<dbReference type="GO" id="GO:0005739">
    <property type="term" value="C:mitochondrion"/>
    <property type="evidence" value="ECO:0007669"/>
    <property type="project" value="EnsemblFungi"/>
</dbReference>
<dbReference type="GO" id="GO:0003872">
    <property type="term" value="F:6-phosphofructokinase activity"/>
    <property type="evidence" value="ECO:0007669"/>
    <property type="project" value="UniProtKB-UniRule"/>
</dbReference>
<dbReference type="GO" id="GO:0016208">
    <property type="term" value="F:AMP binding"/>
    <property type="evidence" value="ECO:0007669"/>
    <property type="project" value="TreeGrafter"/>
</dbReference>
<dbReference type="GO" id="GO:0005524">
    <property type="term" value="F:ATP binding"/>
    <property type="evidence" value="ECO:0007669"/>
    <property type="project" value="UniProtKB-KW"/>
</dbReference>
<dbReference type="GO" id="GO:0070095">
    <property type="term" value="F:fructose-6-phosphate binding"/>
    <property type="evidence" value="ECO:0007669"/>
    <property type="project" value="TreeGrafter"/>
</dbReference>
<dbReference type="GO" id="GO:0042802">
    <property type="term" value="F:identical protein binding"/>
    <property type="evidence" value="ECO:0007669"/>
    <property type="project" value="TreeGrafter"/>
</dbReference>
<dbReference type="GO" id="GO:0046872">
    <property type="term" value="F:metal ion binding"/>
    <property type="evidence" value="ECO:0007669"/>
    <property type="project" value="UniProtKB-KW"/>
</dbReference>
<dbReference type="GO" id="GO:0048029">
    <property type="term" value="F:monosaccharide binding"/>
    <property type="evidence" value="ECO:0007669"/>
    <property type="project" value="TreeGrafter"/>
</dbReference>
<dbReference type="GO" id="GO:0046961">
    <property type="term" value="F:proton-transporting ATPase activity, rotational mechanism"/>
    <property type="evidence" value="ECO:0007669"/>
    <property type="project" value="EnsemblFungi"/>
</dbReference>
<dbReference type="GO" id="GO:0061621">
    <property type="term" value="P:canonical glycolysis"/>
    <property type="evidence" value="ECO:0007669"/>
    <property type="project" value="TreeGrafter"/>
</dbReference>
<dbReference type="GO" id="GO:0071333">
    <property type="term" value="P:cellular response to glucose stimulus"/>
    <property type="evidence" value="ECO:0000315"/>
    <property type="project" value="CAFA"/>
</dbReference>
<dbReference type="GO" id="GO:0030388">
    <property type="term" value="P:fructose 1,6-bisphosphate metabolic process"/>
    <property type="evidence" value="ECO:0007669"/>
    <property type="project" value="TreeGrafter"/>
</dbReference>
<dbReference type="GO" id="GO:0006002">
    <property type="term" value="P:fructose 6-phosphate metabolic process"/>
    <property type="evidence" value="ECO:0007669"/>
    <property type="project" value="EnsemblFungi"/>
</dbReference>
<dbReference type="GO" id="GO:0061615">
    <property type="term" value="P:glycolytic process through fructose-6-phosphate"/>
    <property type="evidence" value="ECO:0000315"/>
    <property type="project" value="CAFA"/>
</dbReference>
<dbReference type="GO" id="GO:0000426">
    <property type="term" value="P:micropexophagy"/>
    <property type="evidence" value="ECO:0000315"/>
    <property type="project" value="CAFA"/>
</dbReference>
<dbReference type="GO" id="GO:0060151">
    <property type="term" value="P:peroxisome localization"/>
    <property type="evidence" value="ECO:0000315"/>
    <property type="project" value="CAFA"/>
</dbReference>
<dbReference type="GO" id="GO:1901098">
    <property type="term" value="P:positive regulation of autophagosome maturation"/>
    <property type="evidence" value="ECO:0000315"/>
    <property type="project" value="CAFA"/>
</dbReference>
<dbReference type="GO" id="GO:0051453">
    <property type="term" value="P:regulation of intracellular pH"/>
    <property type="evidence" value="ECO:0007669"/>
    <property type="project" value="EnsemblFungi"/>
</dbReference>
<dbReference type="FunFam" id="3.40.50.460:FF:000007">
    <property type="entry name" value="ATP-dependent 6-phosphofructokinase"/>
    <property type="match status" value="1"/>
</dbReference>
<dbReference type="FunFam" id="3.40.50.460:FF:000008">
    <property type="entry name" value="ATP-dependent 6-phosphofructokinase"/>
    <property type="match status" value="1"/>
</dbReference>
<dbReference type="Gene3D" id="3.10.180.90">
    <property type="match status" value="1"/>
</dbReference>
<dbReference type="Gene3D" id="3.40.50.450">
    <property type="match status" value="2"/>
</dbReference>
<dbReference type="Gene3D" id="3.40.50.460">
    <property type="entry name" value="Phosphofructokinase domain"/>
    <property type="match status" value="2"/>
</dbReference>
<dbReference type="HAMAP" id="MF_03184">
    <property type="entry name" value="Phosphofructokinase_I_E"/>
    <property type="match status" value="1"/>
</dbReference>
<dbReference type="InterPro" id="IPR009161">
    <property type="entry name" value="6-Pfructokinase_euk"/>
</dbReference>
<dbReference type="InterPro" id="IPR022953">
    <property type="entry name" value="ATP_PFK"/>
</dbReference>
<dbReference type="InterPro" id="IPR040712">
    <property type="entry name" value="Pfk_N"/>
</dbReference>
<dbReference type="InterPro" id="IPR015912">
    <property type="entry name" value="Phosphofructokinase_CS"/>
</dbReference>
<dbReference type="InterPro" id="IPR000023">
    <property type="entry name" value="Phosphofructokinase_dom"/>
</dbReference>
<dbReference type="InterPro" id="IPR035966">
    <property type="entry name" value="PKF_sf"/>
</dbReference>
<dbReference type="NCBIfam" id="TIGR02478">
    <property type="entry name" value="6PF1K_euk"/>
    <property type="match status" value="1"/>
</dbReference>
<dbReference type="NCBIfam" id="NF002872">
    <property type="entry name" value="PRK03202.1"/>
    <property type="match status" value="1"/>
</dbReference>
<dbReference type="PANTHER" id="PTHR13697:SF57">
    <property type="entry name" value="ATP-DEPENDENT 6-PHOSPHOFRUCTOKINASE SUBUNIT ALPHA"/>
    <property type="match status" value="1"/>
</dbReference>
<dbReference type="PANTHER" id="PTHR13697">
    <property type="entry name" value="PHOSPHOFRUCTOKINASE"/>
    <property type="match status" value="1"/>
</dbReference>
<dbReference type="Pfam" id="PF00365">
    <property type="entry name" value="PFK"/>
    <property type="match status" value="2"/>
</dbReference>
<dbReference type="Pfam" id="PF18468">
    <property type="entry name" value="Pfk_N"/>
    <property type="match status" value="1"/>
</dbReference>
<dbReference type="PIRSF" id="PIRSF000533">
    <property type="entry name" value="ATP_PFK_euk"/>
    <property type="match status" value="1"/>
</dbReference>
<dbReference type="PRINTS" id="PR00476">
    <property type="entry name" value="PHFRCTKINASE"/>
</dbReference>
<dbReference type="SUPFAM" id="SSF53784">
    <property type="entry name" value="Phosphofructokinase"/>
    <property type="match status" value="2"/>
</dbReference>
<dbReference type="PROSITE" id="PS00433">
    <property type="entry name" value="PHOSPHOFRUCTOKINASE"/>
    <property type="match status" value="1"/>
</dbReference>
<proteinExistence type="evidence at protein level"/>
<sequence>MPEPSISALSFTSFVTNDDKLFEETFNFYTKLGFHATRSYVKDNRSDFELTGISTDSIKEIWLESFPLSEVVETSAGRELRKPLQESVGYQSEALLGYSPYQSDGVVIKLRLSNHDLQKNKDLPGEVTFFTASIDKLRAKLIEIGAEIIPSEIDLVEFSTKDPMGDVISFSSYPSLSSKKITSPDFFLHPKKEVRSQESIVEQVKSEEGKKKIAIITSGGDAPGMNAAVRAVTRAGIFYGCKVYACYEGYTGLVKGGDMLKELQWQDVRGLLSIGGTIIGTARSKEFRERWGRLQACYNMVSNGIDALVVCGGDGSLTGADLFRNEWPELIKELLGEGKITKEQYETHRNLTIVGLVGSIDNDMCGTDSTIGAYSSLERIIELVDYIDATAASHSRAFVVEVMGRHCGWLGLMSGIATGADYIFIPERPPSETNWKDDLKKVCLRHREKGRRKTTVIVAEGAIDDQLNPITSEEVKDVLVEIGLDTRITRLGHVQRGGAPCAFDRFLATVQGVDAVRAVLESTPAIPSPVISILENKIVRQPLVESVAQTKTVSDAIEAKDFDKALKLRDQEFATSYESFLSVSKYDDGSYLVPESSRLNIAIIHVGAPTSALNPATRVATLNSLAKGHRVFAIRNGFAGLIRHGAVRELNWIDVEDWHNTGGSEIGTNRSLPSDDMGTVAYYFQQYKFDGLIIIGGFEAFTALYQLDAARAQYPIFNIPMCCLPATVSNNVPGTEYSLGSDTCLNTLSGYCDAVKQSASASRRRTFVVEVQGGYSGYLASYAGLITGALAVYTPENPINLQTVQEDIELLTRTYEEDDGKNRSGKIFIHNEKASKVYTTDLIAAIIGEAGKGRFESRTAVPGHVQQGKSPSSIDRVNACRLAIKCCNFIEDANFQVKHNANLSADERHLRFFYDDGVKTSAVSGKSSVIDDNTSVVIGIQGSEVTFTPVKQLWEKETHHKWRKGKNVHWEQLNIVSDLLSGRLSIRTT</sequence>
<keyword id="KW-0021">Allosteric enzyme</keyword>
<keyword id="KW-0067">ATP-binding</keyword>
<keyword id="KW-0963">Cytoplasm</keyword>
<keyword id="KW-0324">Glycolysis</keyword>
<keyword id="KW-0418">Kinase</keyword>
<keyword id="KW-0460">Magnesium</keyword>
<keyword id="KW-0479">Metal-binding</keyword>
<keyword id="KW-0547">Nucleotide-binding</keyword>
<keyword id="KW-1185">Reference proteome</keyword>
<keyword id="KW-0808">Transferase</keyword>
<feature type="chain" id="PRO_0000112042" description="ATP-dependent 6-phosphofructokinase subunit alpha">
    <location>
        <begin position="1"/>
        <end position="989"/>
    </location>
</feature>
<feature type="region of interest" description="N-terminal catalytic PFK domain 1">
    <location>
        <begin position="1"/>
        <end position="585"/>
    </location>
</feature>
<feature type="region of interest" description="Interdomain linker">
    <location>
        <begin position="586"/>
        <end position="599"/>
    </location>
</feature>
<feature type="region of interest" description="C-terminal regulatory PFK domain 2">
    <location>
        <begin position="600"/>
        <end position="989"/>
    </location>
</feature>
<feature type="active site" description="Proton acceptor" evidence="2">
    <location>
        <position position="361"/>
    </location>
</feature>
<feature type="binding site" evidence="2">
    <location>
        <position position="220"/>
    </location>
    <ligand>
        <name>ATP</name>
        <dbReference type="ChEBI" id="CHEBI:30616"/>
    </ligand>
</feature>
<feature type="binding site" evidence="2">
    <location>
        <begin position="283"/>
        <end position="284"/>
    </location>
    <ligand>
        <name>ATP</name>
        <dbReference type="ChEBI" id="CHEBI:30616"/>
    </ligand>
</feature>
<feature type="binding site" evidence="2">
    <location>
        <begin position="313"/>
        <end position="316"/>
    </location>
    <ligand>
        <name>ATP</name>
        <dbReference type="ChEBI" id="CHEBI:30616"/>
    </ligand>
</feature>
<feature type="binding site" evidence="2">
    <location>
        <position position="314"/>
    </location>
    <ligand>
        <name>Mg(2+)</name>
        <dbReference type="ChEBI" id="CHEBI:18420"/>
        <note>catalytic</note>
    </ligand>
</feature>
<feature type="binding site" evidence="2">
    <location>
        <begin position="359"/>
        <end position="361"/>
    </location>
    <ligand>
        <name>beta-D-fructose 6-phosphate</name>
        <dbReference type="ChEBI" id="CHEBI:57634"/>
        <label>1</label>
        <note>ligand shared with subunit beta</note>
    </ligand>
</feature>
<feature type="binding site" evidence="2">
    <location>
        <position position="396"/>
    </location>
    <ligand>
        <name>beta-D-fructose 6-phosphate</name>
        <dbReference type="ChEBI" id="CHEBI:57634"/>
        <label>2</label>
        <note>ligand shared with subunit beta</note>
    </ligand>
</feature>
<feature type="binding site" evidence="2">
    <location>
        <begin position="403"/>
        <end position="405"/>
    </location>
    <ligand>
        <name>beta-D-fructose 6-phosphate</name>
        <dbReference type="ChEBI" id="CHEBI:57634"/>
        <label>1</label>
        <note>ligand shared with subunit beta</note>
    </ligand>
</feature>
<feature type="binding site" evidence="2">
    <location>
        <position position="460"/>
    </location>
    <ligand>
        <name>beta-D-fructose 6-phosphate</name>
        <dbReference type="ChEBI" id="CHEBI:57634"/>
        <label>1</label>
        <note>ligand shared with subunit beta</note>
    </ligand>
</feature>
<feature type="binding site" evidence="2">
    <location>
        <position position="487"/>
    </location>
    <ligand>
        <name>beta-D-fructose 6-phosphate</name>
        <dbReference type="ChEBI" id="CHEBI:57634"/>
        <label>2</label>
        <note>ligand shared with subunit beta</note>
    </ligand>
</feature>
<feature type="binding site" evidence="2">
    <location>
        <begin position="493"/>
        <end position="496"/>
    </location>
    <ligand>
        <name>beta-D-fructose 6-phosphate</name>
        <dbReference type="ChEBI" id="CHEBI:57634"/>
        <label>1</label>
        <note>ligand shared with subunit beta</note>
    </ligand>
</feature>
<feature type="binding site" evidence="2">
    <location>
        <position position="670"/>
    </location>
    <ligand>
        <name>beta-D-fructose 2,6-bisphosphate</name>
        <dbReference type="ChEBI" id="CHEBI:58579"/>
        <label>1</label>
        <note>allosteric activator; ligand shared with subunit beta</note>
    </ligand>
</feature>
<feature type="binding site" evidence="2">
    <location>
        <begin position="727"/>
        <end position="731"/>
    </location>
    <ligand>
        <name>beta-D-fructose 2,6-bisphosphate</name>
        <dbReference type="ChEBI" id="CHEBI:58579"/>
        <label>1</label>
        <note>allosteric activator; ligand shared with subunit beta</note>
    </ligand>
</feature>
<feature type="binding site" evidence="2">
    <location>
        <position position="765"/>
    </location>
    <ligand>
        <name>beta-D-fructose 2,6-bisphosphate</name>
        <dbReference type="ChEBI" id="CHEBI:58579"/>
        <label>2</label>
        <note>allosteric activator; ligand shared with subunit beta</note>
    </ligand>
</feature>
<feature type="binding site" evidence="2">
    <location>
        <begin position="772"/>
        <end position="774"/>
    </location>
    <ligand>
        <name>beta-D-fructose 2,6-bisphosphate</name>
        <dbReference type="ChEBI" id="CHEBI:58579"/>
        <label>1</label>
        <note>allosteric activator; ligand shared with subunit beta</note>
    </ligand>
</feature>
<feature type="binding site" evidence="2">
    <location>
        <position position="832"/>
    </location>
    <ligand>
        <name>beta-D-fructose 2,6-bisphosphate</name>
        <dbReference type="ChEBI" id="CHEBI:58579"/>
        <label>1</label>
        <note>allosteric activator; ligand shared with subunit beta</note>
    </ligand>
</feature>
<feature type="binding site" evidence="2">
    <location>
        <position position="858"/>
    </location>
    <ligand>
        <name>beta-D-fructose 2,6-bisphosphate</name>
        <dbReference type="ChEBI" id="CHEBI:58579"/>
        <label>2</label>
        <note>allosteric activator; ligand shared with subunit beta</note>
    </ligand>
</feature>
<feature type="binding site" evidence="2">
    <location>
        <begin position="864"/>
        <end position="867"/>
    </location>
    <ligand>
        <name>beta-D-fructose 2,6-bisphosphate</name>
        <dbReference type="ChEBI" id="CHEBI:58579"/>
        <label>1</label>
        <note>allosteric activator; ligand shared with subunit beta</note>
    </ligand>
</feature>
<feature type="binding site" evidence="2">
    <location>
        <position position="963"/>
    </location>
    <ligand>
        <name>beta-D-fructose 2,6-bisphosphate</name>
        <dbReference type="ChEBI" id="CHEBI:58579"/>
        <label>1</label>
        <note>allosteric activator; ligand shared with subunit beta</note>
    </ligand>
</feature>
<feature type="mutagenesis site" description="Abolishes catalytic activity, but not the ability to modulate glucose-induced microautophagy of peroxisomes." evidence="3">
    <original>D</original>
    <variation>S</variation>
    <location>
        <position position="361"/>
    </location>
</feature>
<feature type="sequence conflict" description="In Ref. 1; AAB97871." evidence="4" ref="1">
    <original>S</original>
    <variation>SK</variation>
    <location>
        <position position="178"/>
    </location>
</feature>
<feature type="sequence conflict" description="In Ref. 1; AAB97871." evidence="4" ref="1">
    <original>D</original>
    <variation>E</variation>
    <location>
        <position position="570"/>
    </location>
</feature>
<feature type="sequence conflict" description="In Ref. 1; AAB97871." evidence="4" ref="1">
    <original>Y</original>
    <variation>C</variation>
    <location>
        <position position="914"/>
    </location>
</feature>
<organism>
    <name type="scientific">Komagataella phaffii (strain GS115 / ATCC 20864)</name>
    <name type="common">Yeast</name>
    <name type="synonym">Pichia pastoris</name>
    <dbReference type="NCBI Taxonomy" id="644223"/>
    <lineage>
        <taxon>Eukaryota</taxon>
        <taxon>Fungi</taxon>
        <taxon>Dikarya</taxon>
        <taxon>Ascomycota</taxon>
        <taxon>Saccharomycotina</taxon>
        <taxon>Pichiomycetes</taxon>
        <taxon>Pichiales</taxon>
        <taxon>Pichiaceae</taxon>
        <taxon>Komagataella</taxon>
    </lineage>
</organism>
<accession>Q92448</accession>
<accession>C4R0J9</accession>
<evidence type="ECO:0000250" key="1"/>
<evidence type="ECO:0000255" key="2">
    <source>
        <dbReference type="HAMAP-Rule" id="MF_03184"/>
    </source>
</evidence>
<evidence type="ECO:0000269" key="3">
    <source>
    </source>
</evidence>
<evidence type="ECO:0000305" key="4"/>
<gene>
    <name type="primary">PFK1</name>
    <name type="synonym">GSA1</name>
    <name type="ordered locus">PAS_chr2-1_0402</name>
</gene>
<protein>
    <recommendedName>
        <fullName evidence="2">ATP-dependent 6-phosphofructokinase subunit alpha</fullName>
        <ecNumber evidence="2">2.7.1.11</ecNumber>
    </recommendedName>
    <alternativeName>
        <fullName evidence="2">ATP-dependent 6-phosphofructokinase 1</fullName>
        <shortName evidence="2">ATP-PFK 1</shortName>
        <shortName evidence="2">Phosphofructokinase 1</shortName>
    </alternativeName>
    <alternativeName>
        <fullName>Glucose-induced selective autophagy 1 protein</fullName>
    </alternativeName>
    <alternativeName>
        <fullName evidence="2">Phosphohexokinase 1</fullName>
    </alternativeName>
</protein>
<comment type="function">
    <text evidence="2 3">Catalyzes the phosphorylation of D-fructose 6-phosphate to fructose 1,6-bisphosphate by ATP, the first committing step of glycolysis (By similarity). Involved in the modulation of glucose-induced microautophagy of peroxisomes independent of its ability to metabolize glucose intermediates.</text>
</comment>
<comment type="catalytic activity">
    <reaction evidence="2">
        <text>beta-D-fructose 6-phosphate + ATP = beta-D-fructose 1,6-bisphosphate + ADP + H(+)</text>
        <dbReference type="Rhea" id="RHEA:16109"/>
        <dbReference type="ChEBI" id="CHEBI:15378"/>
        <dbReference type="ChEBI" id="CHEBI:30616"/>
        <dbReference type="ChEBI" id="CHEBI:32966"/>
        <dbReference type="ChEBI" id="CHEBI:57634"/>
        <dbReference type="ChEBI" id="CHEBI:456216"/>
        <dbReference type="EC" id="2.7.1.11"/>
    </reaction>
</comment>
<comment type="cofactor">
    <cofactor evidence="2">
        <name>Mg(2+)</name>
        <dbReference type="ChEBI" id="CHEBI:18420"/>
    </cofactor>
</comment>
<comment type="activity regulation">
    <text evidence="2">Allosterically activated by ADP, AMP, or fructose 2,6-bisphosphate, and allosterically inhibited by ATP or citrate.</text>
</comment>
<comment type="pathway">
    <text evidence="2">Carbohydrate degradation; glycolysis; D-glyceraldehyde 3-phosphate and glycerone phosphate from D-glucose: step 3/4.</text>
</comment>
<comment type="subunit">
    <text evidence="1">Heterododecamer of 4 alpha, 4 beta and 4 gamma chains. The gamma chain bridges the N-terminal halves of the alpha and beta subunits (By similarity).</text>
</comment>
<comment type="subcellular location">
    <subcellularLocation>
        <location evidence="2">Cytoplasm</location>
    </subcellularLocation>
</comment>
<comment type="similarity">
    <text evidence="2">Belongs to the phosphofructokinase type A (PFKA) family. ATP-dependent PFK group I subfamily. Eukaryotic two domain clade 'E' sub-subfamily.</text>
</comment>
<reference key="1">
    <citation type="journal article" date="1997" name="J. Cell Sci.">
        <title>Glucose-induced microautophagy in Pichia pastoris requires the alpha-subunit of phosphofructokinase.</title>
        <authorList>
            <person name="Yuan W."/>
            <person name="Tuttle D.L."/>
            <person name="Shi Y.J."/>
            <person name="Ralph G.S."/>
            <person name="Dunn W.A. Jr."/>
        </authorList>
    </citation>
    <scope>NUCLEOTIDE SEQUENCE [GENOMIC DNA]</scope>
    <scope>FUNCTION</scope>
    <scope>MUTAGENESIS OF ASP-361</scope>
    <source>
        <strain>GS115 / ATCC 20864</strain>
    </source>
</reference>
<reference key="2">
    <citation type="journal article" date="2009" name="Nat. Biotechnol.">
        <title>Genome sequence of the recombinant protein production host Pichia pastoris.</title>
        <authorList>
            <person name="De Schutter K."/>
            <person name="Lin Y.-C."/>
            <person name="Tiels P."/>
            <person name="Van Hecke A."/>
            <person name="Glinka S."/>
            <person name="Weber-Lehmann J."/>
            <person name="Rouze P."/>
            <person name="Van de Peer Y."/>
            <person name="Callewaert N."/>
        </authorList>
    </citation>
    <scope>NUCLEOTIDE SEQUENCE [LARGE SCALE GENOMIC DNA]</scope>
    <source>
        <strain>GS115 / ATCC 20864</strain>
    </source>
</reference>
<name>PFKA1_KOMPG</name>